<name>HIS2_PARDP</name>
<dbReference type="EC" id="3.6.1.31" evidence="1"/>
<dbReference type="EMBL" id="CP000489">
    <property type="protein sequence ID" value="ABL69983.1"/>
    <property type="molecule type" value="Genomic_DNA"/>
</dbReference>
<dbReference type="RefSeq" id="WP_011748180.1">
    <property type="nucleotide sequence ID" value="NC_008686.1"/>
</dbReference>
<dbReference type="SMR" id="A1B389"/>
<dbReference type="STRING" id="318586.Pden_1888"/>
<dbReference type="EnsemblBacteria" id="ABL69983">
    <property type="protein sequence ID" value="ABL69983"/>
    <property type="gene ID" value="Pden_1888"/>
</dbReference>
<dbReference type="GeneID" id="93450286"/>
<dbReference type="KEGG" id="pde:Pden_1888"/>
<dbReference type="eggNOG" id="COG0140">
    <property type="taxonomic scope" value="Bacteria"/>
</dbReference>
<dbReference type="HOGENOM" id="CLU_123337_1_1_5"/>
<dbReference type="OrthoDB" id="9814738at2"/>
<dbReference type="UniPathway" id="UPA00031">
    <property type="reaction ID" value="UER00007"/>
</dbReference>
<dbReference type="Proteomes" id="UP000000361">
    <property type="component" value="Chromosome 1"/>
</dbReference>
<dbReference type="GO" id="GO:0005737">
    <property type="term" value="C:cytoplasm"/>
    <property type="evidence" value="ECO:0007669"/>
    <property type="project" value="UniProtKB-SubCell"/>
</dbReference>
<dbReference type="GO" id="GO:0005524">
    <property type="term" value="F:ATP binding"/>
    <property type="evidence" value="ECO:0007669"/>
    <property type="project" value="UniProtKB-KW"/>
</dbReference>
<dbReference type="GO" id="GO:0004636">
    <property type="term" value="F:phosphoribosyl-ATP diphosphatase activity"/>
    <property type="evidence" value="ECO:0007669"/>
    <property type="project" value="UniProtKB-UniRule"/>
</dbReference>
<dbReference type="GO" id="GO:0000105">
    <property type="term" value="P:L-histidine biosynthetic process"/>
    <property type="evidence" value="ECO:0007669"/>
    <property type="project" value="UniProtKB-UniRule"/>
</dbReference>
<dbReference type="CDD" id="cd11534">
    <property type="entry name" value="NTP-PPase_HisIE_like"/>
    <property type="match status" value="1"/>
</dbReference>
<dbReference type="FunFam" id="1.10.287.1080:FF:000002">
    <property type="entry name" value="Histidine biosynthesis bifunctional protein HisIE"/>
    <property type="match status" value="1"/>
</dbReference>
<dbReference type="Gene3D" id="1.10.287.1080">
    <property type="entry name" value="MazG-like"/>
    <property type="match status" value="1"/>
</dbReference>
<dbReference type="HAMAP" id="MF_01020">
    <property type="entry name" value="HisE"/>
    <property type="match status" value="1"/>
</dbReference>
<dbReference type="InterPro" id="IPR008179">
    <property type="entry name" value="HisE"/>
</dbReference>
<dbReference type="InterPro" id="IPR021130">
    <property type="entry name" value="PRib-ATP_PPHydrolase-like"/>
</dbReference>
<dbReference type="NCBIfam" id="TIGR03188">
    <property type="entry name" value="histidine_hisI"/>
    <property type="match status" value="1"/>
</dbReference>
<dbReference type="NCBIfam" id="NF001611">
    <property type="entry name" value="PRK00400.1-3"/>
    <property type="match status" value="1"/>
</dbReference>
<dbReference type="NCBIfam" id="NF001613">
    <property type="entry name" value="PRK00400.1-5"/>
    <property type="match status" value="1"/>
</dbReference>
<dbReference type="PANTHER" id="PTHR42945">
    <property type="entry name" value="HISTIDINE BIOSYNTHESIS BIFUNCTIONAL PROTEIN"/>
    <property type="match status" value="1"/>
</dbReference>
<dbReference type="PANTHER" id="PTHR42945:SF9">
    <property type="entry name" value="HISTIDINE BIOSYNTHESIS BIFUNCTIONAL PROTEIN HISIE"/>
    <property type="match status" value="1"/>
</dbReference>
<dbReference type="Pfam" id="PF01503">
    <property type="entry name" value="PRA-PH"/>
    <property type="match status" value="1"/>
</dbReference>
<dbReference type="SUPFAM" id="SSF101386">
    <property type="entry name" value="all-alpha NTP pyrophosphatases"/>
    <property type="match status" value="1"/>
</dbReference>
<reference key="1">
    <citation type="submission" date="2006-12" db="EMBL/GenBank/DDBJ databases">
        <title>Complete sequence of chromosome 1 of Paracoccus denitrificans PD1222.</title>
        <authorList>
            <person name="Copeland A."/>
            <person name="Lucas S."/>
            <person name="Lapidus A."/>
            <person name="Barry K."/>
            <person name="Detter J.C."/>
            <person name="Glavina del Rio T."/>
            <person name="Hammon N."/>
            <person name="Israni S."/>
            <person name="Dalin E."/>
            <person name="Tice H."/>
            <person name="Pitluck S."/>
            <person name="Munk A.C."/>
            <person name="Brettin T."/>
            <person name="Bruce D."/>
            <person name="Han C."/>
            <person name="Tapia R."/>
            <person name="Gilna P."/>
            <person name="Schmutz J."/>
            <person name="Larimer F."/>
            <person name="Land M."/>
            <person name="Hauser L."/>
            <person name="Kyrpides N."/>
            <person name="Lykidis A."/>
            <person name="Spiro S."/>
            <person name="Richardson D.J."/>
            <person name="Moir J.W.B."/>
            <person name="Ferguson S.J."/>
            <person name="van Spanning R.J.M."/>
            <person name="Richardson P."/>
        </authorList>
    </citation>
    <scope>NUCLEOTIDE SEQUENCE [LARGE SCALE GENOMIC DNA]</scope>
    <source>
        <strain>Pd 1222</strain>
    </source>
</reference>
<accession>A1B389</accession>
<organism>
    <name type="scientific">Paracoccus denitrificans (strain Pd 1222)</name>
    <dbReference type="NCBI Taxonomy" id="318586"/>
    <lineage>
        <taxon>Bacteria</taxon>
        <taxon>Pseudomonadati</taxon>
        <taxon>Pseudomonadota</taxon>
        <taxon>Alphaproteobacteria</taxon>
        <taxon>Rhodobacterales</taxon>
        <taxon>Paracoccaceae</taxon>
        <taxon>Paracoccus</taxon>
    </lineage>
</organism>
<evidence type="ECO:0000255" key="1">
    <source>
        <dbReference type="HAMAP-Rule" id="MF_01020"/>
    </source>
</evidence>
<evidence type="ECO:0000256" key="2">
    <source>
        <dbReference type="SAM" id="MobiDB-lite"/>
    </source>
</evidence>
<sequence>MSGPHPTGLHRLAETIAARKGADPETSWTAKLLAKGPEKCAEKFGEEAVEAIIEAVKGDRAKLISEAADTLYHLLVMLAARDVTLSDVENELDRREGRSGIEEKASRK</sequence>
<gene>
    <name evidence="1" type="primary">hisE</name>
    <name type="ordered locus">Pden_1888</name>
</gene>
<proteinExistence type="inferred from homology"/>
<keyword id="KW-0028">Amino-acid biosynthesis</keyword>
<keyword id="KW-0067">ATP-binding</keyword>
<keyword id="KW-0963">Cytoplasm</keyword>
<keyword id="KW-0368">Histidine biosynthesis</keyword>
<keyword id="KW-0378">Hydrolase</keyword>
<keyword id="KW-0547">Nucleotide-binding</keyword>
<keyword id="KW-1185">Reference proteome</keyword>
<feature type="chain" id="PRO_0000319656" description="Phosphoribosyl-ATP pyrophosphatase">
    <location>
        <begin position="1"/>
        <end position="108"/>
    </location>
</feature>
<feature type="region of interest" description="Disordered" evidence="2">
    <location>
        <begin position="88"/>
        <end position="108"/>
    </location>
</feature>
<feature type="compositionally biased region" description="Basic and acidic residues" evidence="2">
    <location>
        <begin position="91"/>
        <end position="108"/>
    </location>
</feature>
<comment type="catalytic activity">
    <reaction evidence="1">
        <text>1-(5-phospho-beta-D-ribosyl)-ATP + H2O = 1-(5-phospho-beta-D-ribosyl)-5'-AMP + diphosphate + H(+)</text>
        <dbReference type="Rhea" id="RHEA:22828"/>
        <dbReference type="ChEBI" id="CHEBI:15377"/>
        <dbReference type="ChEBI" id="CHEBI:15378"/>
        <dbReference type="ChEBI" id="CHEBI:33019"/>
        <dbReference type="ChEBI" id="CHEBI:59457"/>
        <dbReference type="ChEBI" id="CHEBI:73183"/>
        <dbReference type="EC" id="3.6.1.31"/>
    </reaction>
</comment>
<comment type="pathway">
    <text evidence="1">Amino-acid biosynthesis; L-histidine biosynthesis; L-histidine from 5-phospho-alpha-D-ribose 1-diphosphate: step 2/9.</text>
</comment>
<comment type="subcellular location">
    <subcellularLocation>
        <location evidence="1">Cytoplasm</location>
    </subcellularLocation>
</comment>
<comment type="similarity">
    <text evidence="1">Belongs to the PRA-PH family.</text>
</comment>
<protein>
    <recommendedName>
        <fullName evidence="1">Phosphoribosyl-ATP pyrophosphatase</fullName>
        <shortName evidence="1">PRA-PH</shortName>
        <ecNumber evidence="1">3.6.1.31</ecNumber>
    </recommendedName>
</protein>